<organism evidence="8">
    <name type="scientific">Caenorhabditis elegans</name>
    <dbReference type="NCBI Taxonomy" id="6239"/>
    <lineage>
        <taxon>Eukaryota</taxon>
        <taxon>Metazoa</taxon>
        <taxon>Ecdysozoa</taxon>
        <taxon>Nematoda</taxon>
        <taxon>Chromadorea</taxon>
        <taxon>Rhabditida</taxon>
        <taxon>Rhabditina</taxon>
        <taxon>Rhabditomorpha</taxon>
        <taxon>Rhabditoidea</taxon>
        <taxon>Rhabditidae</taxon>
        <taxon>Peloderinae</taxon>
        <taxon>Caenorhabditis</taxon>
    </lineage>
</organism>
<feature type="transit peptide" description="Mitochondrion" evidence="2">
    <location>
        <begin position="1"/>
        <end position="6"/>
    </location>
</feature>
<feature type="chain" id="PRO_0000452347" description="5-cytosine rRNA methyltransferase nsun-4">
    <location>
        <begin position="7"/>
        <end position="465"/>
    </location>
</feature>
<feature type="region of interest" description="Disordered" evidence="4">
    <location>
        <begin position="106"/>
        <end position="145"/>
    </location>
</feature>
<feature type="compositionally biased region" description="Basic and acidic residues" evidence="4">
    <location>
        <begin position="106"/>
        <end position="130"/>
    </location>
</feature>
<feature type="active site" description="Nucleophile" evidence="3">
    <location>
        <position position="390"/>
    </location>
</feature>
<feature type="binding site" evidence="3">
    <location>
        <begin position="260"/>
        <end position="266"/>
    </location>
    <ligand>
        <name>S-adenosyl-L-methionine</name>
        <dbReference type="ChEBI" id="CHEBI:59789"/>
    </ligand>
</feature>
<feature type="binding site" evidence="3">
    <location>
        <position position="283"/>
    </location>
    <ligand>
        <name>S-adenosyl-L-methionine</name>
        <dbReference type="ChEBI" id="CHEBI:59789"/>
    </ligand>
</feature>
<feature type="binding site" evidence="3">
    <location>
        <position position="316"/>
    </location>
    <ligand>
        <name>S-adenosyl-L-methionine</name>
        <dbReference type="ChEBI" id="CHEBI:59789"/>
    </ligand>
</feature>
<feature type="binding site" evidence="3">
    <location>
        <position position="335"/>
    </location>
    <ligand>
        <name>S-adenosyl-L-methionine</name>
        <dbReference type="ChEBI" id="CHEBI:59789"/>
    </ligand>
</feature>
<feature type="splice variant" id="VSP_060968" description="In isoform c." evidence="7">
    <location>
        <begin position="1"/>
        <end position="427"/>
    </location>
</feature>
<feature type="splice variant" id="VSP_060969" description="In isoform b." evidence="7">
    <location>
        <begin position="1"/>
        <end position="89"/>
    </location>
</feature>
<feature type="mutagenesis site" description="In mj457; viable and produces viable progeny. Reduces body length. Reduces mitochondrial tRNA and rRNA methylation state. Increases the reduction in body length, and at 25 degrees Celsius reduces the number of progeny in a nsun-1 (mj473), nsun-2 (mj458) and nsun-5 (tm3898) mutant background. Abolishes the methylation of carbon-5 cysteines and its metabolic derivative 2'-O-methyl-5-hydroxymethylcytosine in RNA in a nsun-1 (mj473), nsun-2 (mj458) and nsun-5 (tm3898) mutant background." evidence="5">
    <original>C</original>
    <variation>A</variation>
    <location>
        <position position="390"/>
    </location>
</feature>
<keyword id="KW-0025">Alternative splicing</keyword>
<keyword id="KW-0489">Methyltransferase</keyword>
<keyword id="KW-0496">Mitochondrion</keyword>
<keyword id="KW-1185">Reference proteome</keyword>
<keyword id="KW-0694">RNA-binding</keyword>
<keyword id="KW-0698">rRNA processing</keyword>
<keyword id="KW-0949">S-adenosyl-L-methionine</keyword>
<keyword id="KW-0808">Transferase</keyword>
<keyword id="KW-0809">Transit peptide</keyword>
<keyword id="KW-0819">tRNA processing</keyword>
<reference evidence="8" key="1">
    <citation type="journal article" date="1998" name="Science">
        <title>Genome sequence of the nematode C. elegans: a platform for investigating biology.</title>
        <authorList>
            <consortium name="The C. elegans sequencing consortium"/>
        </authorList>
    </citation>
    <scope>NUCLEOTIDE SEQUENCE [LARGE SCALE GENOMIC DNA]</scope>
    <source>
        <strain evidence="8">Bristol N2</strain>
    </source>
</reference>
<reference evidence="7" key="2">
    <citation type="journal article" date="2020" name="Elife">
        <title>The ribosomal RNA m5C methyltransferase NSUN-1 modulates healthspan and oogenesis in Caenorhabditis elegans.</title>
        <authorList>
            <person name="Heissenberger C."/>
            <person name="Rollins J.A."/>
            <person name="Krammer T.L."/>
            <person name="Nagelreiter F."/>
            <person name="Stocker I."/>
            <person name="Wacheul L."/>
            <person name="Shpylovyi A."/>
            <person name="Tav K."/>
            <person name="Snow S."/>
            <person name="Grillari J."/>
            <person name="Rogers A.N."/>
            <person name="Lafontaine D.L."/>
            <person name="Schosserer M."/>
        </authorList>
    </citation>
    <scope>DEVELOPMENTAL STAGE</scope>
</reference>
<reference evidence="7" key="3">
    <citation type="journal article" date="2020" name="EMBO J.">
        <title>Translational adaptation to heat stress is mediated by RNA 5-methylcytosine in Caenorhabditis elegans.</title>
        <authorList>
            <person name="Navarro I.C."/>
            <person name="Tuorto F."/>
            <person name="Jordan D."/>
            <person name="Legrand C."/>
            <person name="Price J."/>
            <person name="Braukmann F."/>
            <person name="Hendrick A.G."/>
            <person name="Akay A."/>
            <person name="Kotter A."/>
            <person name="Helm M."/>
            <person name="Lyko F."/>
            <person name="Miska E.A."/>
        </authorList>
    </citation>
    <scope>FUNCTION</scope>
    <scope>CATALYTIC ACTIVITY</scope>
    <scope>SUBCELLULAR LOCATION</scope>
    <scope>DISRUPTION PHENOTYPE</scope>
    <scope>MUTAGENESIS OF CYS-390</scope>
</reference>
<proteinExistence type="evidence at protein level"/>
<comment type="function">
    <text evidence="5">Mitochondrial methyltransferase which methylates cytosine to 5-methylcytosine (m5C) in rRNAs and tRNAs at multiple sites (PubMed:33283887). May play a role in the translation of leucine and proline codons (PubMed:33283887).</text>
</comment>
<comment type="catalytic activity">
    <reaction evidence="5">
        <text>a cytidine in rRNA + S-adenosyl-L-methionine = a 5-methylcytidine in rRNA + S-adenosyl-L-homocysteine + H(+)</text>
        <dbReference type="Rhea" id="RHEA:61484"/>
        <dbReference type="Rhea" id="RHEA-COMP:15836"/>
        <dbReference type="Rhea" id="RHEA-COMP:15837"/>
        <dbReference type="ChEBI" id="CHEBI:15378"/>
        <dbReference type="ChEBI" id="CHEBI:57856"/>
        <dbReference type="ChEBI" id="CHEBI:59789"/>
        <dbReference type="ChEBI" id="CHEBI:74483"/>
        <dbReference type="ChEBI" id="CHEBI:82748"/>
    </reaction>
</comment>
<comment type="catalytic activity">
    <reaction evidence="5">
        <text>a cytidine in tRNA + S-adenosyl-L-methionine = a 5-methylcytidine in tRNA + S-adenosyl-L-homocysteine + H(+)</text>
        <dbReference type="Rhea" id="RHEA:61468"/>
        <dbReference type="Rhea" id="RHEA-COMP:13670"/>
        <dbReference type="Rhea" id="RHEA-COMP:15827"/>
        <dbReference type="ChEBI" id="CHEBI:15378"/>
        <dbReference type="ChEBI" id="CHEBI:57856"/>
        <dbReference type="ChEBI" id="CHEBI:59789"/>
        <dbReference type="ChEBI" id="CHEBI:74483"/>
        <dbReference type="ChEBI" id="CHEBI:82748"/>
    </reaction>
</comment>
<comment type="subcellular location">
    <subcellularLocation>
        <location evidence="1">Mitochondrion</location>
    </subcellularLocation>
</comment>
<comment type="alternative products">
    <event type="alternative splicing"/>
    <isoform>
        <id>Q95XR2-1</id>
        <name evidence="9">a</name>
        <sequence type="displayed"/>
    </isoform>
    <isoform>
        <id>Q95XR2-2</id>
        <name evidence="10">b</name>
        <sequence type="described" ref="VSP_060969"/>
    </isoform>
    <isoform>
        <id>Q95XR2-3</id>
        <name evidence="11">c</name>
        <sequence type="described" ref="VSP_060968"/>
    </isoform>
</comment>
<comment type="developmental stage">
    <text evidence="6">Expression increases during the larval stages to adulthood.</text>
</comment>
<comment type="disruption phenotype">
    <text evidence="5">RNAi-mediated knockdown does not result in fertility defects.</text>
</comment>
<comment type="similarity">
    <text evidence="3">Belongs to the class I-like SAM-binding methyltransferase superfamily. RsmB/NOP family.</text>
</comment>
<dbReference type="EC" id="2.1.1.-" evidence="3 5"/>
<dbReference type="EMBL" id="BX284601">
    <property type="protein sequence ID" value="CCD69919.1"/>
    <property type="molecule type" value="Genomic_DNA"/>
</dbReference>
<dbReference type="EMBL" id="BX284601">
    <property type="protein sequence ID" value="CDO41156.1"/>
    <property type="molecule type" value="Genomic_DNA"/>
</dbReference>
<dbReference type="EMBL" id="BX284601">
    <property type="protein sequence ID" value="CDO41157.1"/>
    <property type="molecule type" value="Genomic_DNA"/>
</dbReference>
<dbReference type="RefSeq" id="NP_001293364.1">
    <molecule id="Q95XR2-2"/>
    <property type="nucleotide sequence ID" value="NM_001306435.3"/>
</dbReference>
<dbReference type="RefSeq" id="NP_001293365.1">
    <molecule id="Q95XR2-3"/>
    <property type="nucleotide sequence ID" value="NM_001306436.3"/>
</dbReference>
<dbReference type="RefSeq" id="NP_490958.1">
    <molecule id="Q95XR2-1"/>
    <property type="nucleotide sequence ID" value="NM_058557.4"/>
</dbReference>
<dbReference type="SMR" id="Q95XR2"/>
<dbReference type="FunCoup" id="Q95XR2">
    <property type="interactions" value="1471"/>
</dbReference>
<dbReference type="STRING" id="6239.Y39G10AR.21a.1"/>
<dbReference type="PaxDb" id="6239-Y39G10AR.21"/>
<dbReference type="PeptideAtlas" id="Q95XR2"/>
<dbReference type="EnsemblMetazoa" id="Y39G10AR.21a.1">
    <molecule id="Q95XR2-1"/>
    <property type="protein sequence ID" value="Y39G10AR.21a.1"/>
    <property type="gene ID" value="WBGene00021476"/>
</dbReference>
<dbReference type="EnsemblMetazoa" id="Y39G10AR.21b.1">
    <molecule id="Q95XR2-2"/>
    <property type="protein sequence ID" value="Y39G10AR.21b.1"/>
    <property type="gene ID" value="WBGene00021476"/>
</dbReference>
<dbReference type="EnsemblMetazoa" id="Y39G10AR.21c.1">
    <molecule id="Q95XR2-3"/>
    <property type="protein sequence ID" value="Y39G10AR.21c.1"/>
    <property type="gene ID" value="WBGene00021476"/>
</dbReference>
<dbReference type="GeneID" id="171790"/>
<dbReference type="KEGG" id="cel:CELE_Y39G10AR.21"/>
<dbReference type="UCSC" id="Y39G10AR.21.1">
    <molecule id="Q95XR2-1"/>
    <property type="organism name" value="c. elegans"/>
</dbReference>
<dbReference type="AGR" id="WB:WBGene00021476"/>
<dbReference type="CTD" id="171790"/>
<dbReference type="WormBase" id="Y39G10AR.21a">
    <molecule id="Q95XR2-1"/>
    <property type="protein sequence ID" value="CE28981"/>
    <property type="gene ID" value="WBGene00021476"/>
    <property type="gene designation" value="nsun-4"/>
</dbReference>
<dbReference type="WormBase" id="Y39G10AR.21b">
    <molecule id="Q95XR2-2"/>
    <property type="protein sequence ID" value="CE49666"/>
    <property type="gene ID" value="WBGene00021476"/>
    <property type="gene designation" value="nsun-4"/>
</dbReference>
<dbReference type="WormBase" id="Y39G10AR.21c">
    <molecule id="Q95XR2-3"/>
    <property type="protein sequence ID" value="CE49707"/>
    <property type="gene ID" value="WBGene00021476"/>
    <property type="gene designation" value="nsun-4"/>
</dbReference>
<dbReference type="eggNOG" id="KOG2198">
    <property type="taxonomic scope" value="Eukaryota"/>
</dbReference>
<dbReference type="GeneTree" id="ENSGT00940000153665"/>
<dbReference type="HOGENOM" id="CLU_041061_2_0_1"/>
<dbReference type="InParanoid" id="Q95XR2"/>
<dbReference type="OMA" id="MVNNFGD"/>
<dbReference type="OrthoDB" id="8020218at2759"/>
<dbReference type="PhylomeDB" id="Q95XR2"/>
<dbReference type="PRO" id="PR:Q95XR2"/>
<dbReference type="Proteomes" id="UP000001940">
    <property type="component" value="Chromosome I"/>
</dbReference>
<dbReference type="Bgee" id="WBGene00021476">
    <property type="expression patterns" value="Expressed in germ line (C elegans) and 4 other cell types or tissues"/>
</dbReference>
<dbReference type="ExpressionAtlas" id="Q95XR2">
    <property type="expression patterns" value="baseline and differential"/>
</dbReference>
<dbReference type="GO" id="GO:0005739">
    <property type="term" value="C:mitochondrion"/>
    <property type="evidence" value="ECO:0007669"/>
    <property type="project" value="UniProtKB-SubCell"/>
</dbReference>
<dbReference type="GO" id="GO:0003723">
    <property type="term" value="F:RNA binding"/>
    <property type="evidence" value="ECO:0007669"/>
    <property type="project" value="UniProtKB-KW"/>
</dbReference>
<dbReference type="GO" id="GO:0009383">
    <property type="term" value="F:rRNA (cytosine-C5-)-methyltransferase activity"/>
    <property type="evidence" value="ECO:0000315"/>
    <property type="project" value="UniProtKB"/>
</dbReference>
<dbReference type="GO" id="GO:0016428">
    <property type="term" value="F:tRNA (cytidine-5-)-methyltransferase activity"/>
    <property type="evidence" value="ECO:0000315"/>
    <property type="project" value="UniProtKB"/>
</dbReference>
<dbReference type="GO" id="GO:0008033">
    <property type="term" value="P:tRNA processing"/>
    <property type="evidence" value="ECO:0007669"/>
    <property type="project" value="UniProtKB-KW"/>
</dbReference>
<dbReference type="FunFam" id="3.40.50.150:FF:000055">
    <property type="entry name" value="5-methylcytosine rRNA methyltransferase NSUN4"/>
    <property type="match status" value="1"/>
</dbReference>
<dbReference type="Gene3D" id="6.20.240.40">
    <property type="match status" value="1"/>
</dbReference>
<dbReference type="Gene3D" id="3.40.50.150">
    <property type="entry name" value="Vaccinia Virus protein VP39"/>
    <property type="match status" value="1"/>
</dbReference>
<dbReference type="InterPro" id="IPR049560">
    <property type="entry name" value="MeTrfase_RsmB-F_NOP2_cat"/>
</dbReference>
<dbReference type="InterPro" id="IPR001678">
    <property type="entry name" value="MeTrfase_RsmB-F_NOP2_dom"/>
</dbReference>
<dbReference type="InterPro" id="IPR023267">
    <property type="entry name" value="RCMT"/>
</dbReference>
<dbReference type="InterPro" id="IPR029063">
    <property type="entry name" value="SAM-dependent_MTases_sf"/>
</dbReference>
<dbReference type="PANTHER" id="PTHR22808:SF3">
    <property type="entry name" value="5-METHYLCYTOSINE RRNA METHYLTRANSFERASE NSUN4"/>
    <property type="match status" value="1"/>
</dbReference>
<dbReference type="PANTHER" id="PTHR22808">
    <property type="entry name" value="NCL1 YEAST -RELATED NOL1/NOP2/FMU SUN DOMAIN-CONTAINING"/>
    <property type="match status" value="1"/>
</dbReference>
<dbReference type="Pfam" id="PF01189">
    <property type="entry name" value="Methyltr_RsmB-F"/>
    <property type="match status" value="1"/>
</dbReference>
<dbReference type="PRINTS" id="PR02008">
    <property type="entry name" value="RCMTFAMILY"/>
</dbReference>
<dbReference type="SUPFAM" id="SSF53335">
    <property type="entry name" value="S-adenosyl-L-methionine-dependent methyltransferases"/>
    <property type="match status" value="1"/>
</dbReference>
<dbReference type="PROSITE" id="PS51686">
    <property type="entry name" value="SAM_MT_RSMB_NOP"/>
    <property type="match status" value="1"/>
</dbReference>
<evidence type="ECO:0000250" key="1">
    <source>
        <dbReference type="UniProtKB" id="Q96CB9"/>
    </source>
</evidence>
<evidence type="ECO:0000255" key="2"/>
<evidence type="ECO:0000255" key="3">
    <source>
        <dbReference type="PROSITE-ProRule" id="PRU01023"/>
    </source>
</evidence>
<evidence type="ECO:0000256" key="4">
    <source>
        <dbReference type="SAM" id="MobiDB-lite"/>
    </source>
</evidence>
<evidence type="ECO:0000269" key="5">
    <source>
    </source>
</evidence>
<evidence type="ECO:0000269" key="6">
    <source>
    </source>
</evidence>
<evidence type="ECO:0000305" key="7"/>
<evidence type="ECO:0000312" key="8">
    <source>
        <dbReference type="Proteomes" id="UP000001940"/>
    </source>
</evidence>
<evidence type="ECO:0000312" key="9">
    <source>
        <dbReference type="WormBase" id="Y39G10AR.21a"/>
    </source>
</evidence>
<evidence type="ECO:0000312" key="10">
    <source>
        <dbReference type="WormBase" id="Y39G10AR.21b"/>
    </source>
</evidence>
<evidence type="ECO:0000312" key="11">
    <source>
        <dbReference type="WormBase" id="Y39G10AR.21c"/>
    </source>
</evidence>
<name>NSUN4_CAEEL</name>
<accession>Q95XR2</accession>
<accession>X5LQ37</accession>
<accession>X5LVB3</accession>
<gene>
    <name evidence="9" type="primary">nsun-4</name>
    <name evidence="9" type="ORF">Y39G10AR.21</name>
</gene>
<sequence>MSCLRQSSQSFYFTQIRWKTVKFKTKIAKTKPLKTPSAQALDHFDFYYGPLFGKKWPSIRLGLLSPNRYLAVMNTMSRNWQAHDEILSDMGAKDLLASIRGKAEDQAIETKRKSVEEKANRETQKVKHEISNPSTSTNTEDSEPDEAIFRSAAGLGEFRASAGELSSGSLQMGLGQSNQNKNVEITGFEGEGVRIPKRDHFFYYPQALHVRSFDRAVLLDFPAPMKDEVGVPSYWLLDGGSLLPVLALGLQKDDSLLDMCAAPGGKSLLAALSNLPSKIVCNDFKLARLGQLKRALMTYVPEDSETIDKFVLKRKDASDVKTWDEFEAYDKVLVDVPCSTDRLSVSTDDGNLFSTGSTQQRLDLPVLQTKILVNALRSVKVGGSVVYSTCTLSPSQNEAVVENAVAVVRNDFGIVTVEESLHQLVSHMTSSGLYRFHDTPLGALVVPFLPSNFGPMYICKLTRLQ</sequence>
<protein>
    <recommendedName>
        <fullName evidence="7">5-cytosine rRNA methyltransferase nsun-4</fullName>
        <ecNumber evidence="3 5">2.1.1.-</ecNumber>
    </recommendedName>
    <alternativeName>
        <fullName evidence="7">5-cytosine tRNA methyltransferase nsun-4</fullName>
        <ecNumber evidence="3 5">2.1.1.-</ecNumber>
    </alternativeName>
    <alternativeName>
        <fullName evidence="9">NOL1/NOP2/Sun domain family member 4</fullName>
    </alternativeName>
    <alternativeName>
        <fullName evidence="7">RNA cytosine C(5)-methyltransferase nsun-4</fullName>
    </alternativeName>
    <alternativeName>
        <fullName evidence="7">rRNA cytosine C(5)-methyltransferase nsun-4</fullName>
    </alternativeName>
    <alternativeName>
        <fullName evidence="7">tRNA cytosine C(5)-methyltransferase nsun-4</fullName>
    </alternativeName>
</protein>